<accession>A4QKL4</accession>
<comment type="subunit">
    <text evidence="1">Part of the 30S ribosomal subunit.</text>
</comment>
<comment type="subcellular location">
    <subcellularLocation>
        <location>Plastid</location>
        <location>Chloroplast</location>
    </subcellularLocation>
</comment>
<comment type="similarity">
    <text evidence="1">Belongs to the bacterial ribosomal protein bS18 family.</text>
</comment>
<proteinExistence type="inferred from homology"/>
<organism>
    <name type="scientific">Capsella bursa-pastoris</name>
    <name type="common">Shepherd's purse</name>
    <name type="synonym">Thlaspi bursa-pastoris</name>
    <dbReference type="NCBI Taxonomy" id="3719"/>
    <lineage>
        <taxon>Eukaryota</taxon>
        <taxon>Viridiplantae</taxon>
        <taxon>Streptophyta</taxon>
        <taxon>Embryophyta</taxon>
        <taxon>Tracheophyta</taxon>
        <taxon>Spermatophyta</taxon>
        <taxon>Magnoliopsida</taxon>
        <taxon>eudicotyledons</taxon>
        <taxon>Gunneridae</taxon>
        <taxon>Pentapetalae</taxon>
        <taxon>rosids</taxon>
        <taxon>malvids</taxon>
        <taxon>Brassicales</taxon>
        <taxon>Brassicaceae</taxon>
        <taxon>Camelineae</taxon>
        <taxon>Capsella</taxon>
    </lineage>
</organism>
<geneLocation type="chloroplast"/>
<gene>
    <name evidence="1" type="primary">rps18</name>
</gene>
<feature type="chain" id="PRO_0000345571" description="Small ribosomal subunit protein bS18c">
    <location>
        <begin position="1"/>
        <end position="101"/>
    </location>
</feature>
<protein>
    <recommendedName>
        <fullName evidence="1">Small ribosomal subunit protein bS18c</fullName>
    </recommendedName>
    <alternativeName>
        <fullName evidence="2">30S ribosomal protein S18, chloroplastic</fullName>
    </alternativeName>
</protein>
<evidence type="ECO:0000255" key="1">
    <source>
        <dbReference type="HAMAP-Rule" id="MF_00270"/>
    </source>
</evidence>
<evidence type="ECO:0000305" key="2"/>
<sequence>MNKSKRLFTKSKRSFRRRLPPIQSGDRIDYRNMSLISRFISEQGKILSRRVNRVTLKQQRLITIAIKQARILSLLPFLNNQKQFERSESTPRTTSLRTRKK</sequence>
<reference key="1">
    <citation type="submission" date="2007-03" db="EMBL/GenBank/DDBJ databases">
        <title>Sequencing analysis of Capsella bursa-pastoris JO22 chloroplast DNA.</title>
        <authorList>
            <person name="Hosouchi T."/>
            <person name="Tsuruoka H."/>
            <person name="Kotani H."/>
        </authorList>
    </citation>
    <scope>NUCLEOTIDE SEQUENCE [LARGE SCALE GENOMIC DNA]</scope>
</reference>
<keyword id="KW-0150">Chloroplast</keyword>
<keyword id="KW-0934">Plastid</keyword>
<keyword id="KW-0687">Ribonucleoprotein</keyword>
<keyword id="KW-0689">Ribosomal protein</keyword>
<keyword id="KW-0694">RNA-binding</keyword>
<keyword id="KW-0699">rRNA-binding</keyword>
<dbReference type="EMBL" id="AP009371">
    <property type="protein sequence ID" value="BAF50219.1"/>
    <property type="molecule type" value="Genomic_DNA"/>
</dbReference>
<dbReference type="RefSeq" id="YP_001123395.1">
    <property type="nucleotide sequence ID" value="NC_009270.1"/>
</dbReference>
<dbReference type="SMR" id="A4QKL4"/>
<dbReference type="GeneID" id="4961610"/>
<dbReference type="GO" id="GO:0009507">
    <property type="term" value="C:chloroplast"/>
    <property type="evidence" value="ECO:0007669"/>
    <property type="project" value="UniProtKB-SubCell"/>
</dbReference>
<dbReference type="GO" id="GO:0005763">
    <property type="term" value="C:mitochondrial small ribosomal subunit"/>
    <property type="evidence" value="ECO:0007669"/>
    <property type="project" value="TreeGrafter"/>
</dbReference>
<dbReference type="GO" id="GO:0070181">
    <property type="term" value="F:small ribosomal subunit rRNA binding"/>
    <property type="evidence" value="ECO:0007669"/>
    <property type="project" value="TreeGrafter"/>
</dbReference>
<dbReference type="GO" id="GO:0003735">
    <property type="term" value="F:structural constituent of ribosome"/>
    <property type="evidence" value="ECO:0007669"/>
    <property type="project" value="InterPro"/>
</dbReference>
<dbReference type="GO" id="GO:0006412">
    <property type="term" value="P:translation"/>
    <property type="evidence" value="ECO:0007669"/>
    <property type="project" value="UniProtKB-UniRule"/>
</dbReference>
<dbReference type="FunFam" id="4.10.640.10:FF:000002">
    <property type="entry name" value="30S ribosomal protein S18, chloroplastic"/>
    <property type="match status" value="1"/>
</dbReference>
<dbReference type="Gene3D" id="4.10.640.10">
    <property type="entry name" value="Ribosomal protein S18"/>
    <property type="match status" value="1"/>
</dbReference>
<dbReference type="HAMAP" id="MF_00270">
    <property type="entry name" value="Ribosomal_bS18"/>
    <property type="match status" value="1"/>
</dbReference>
<dbReference type="InterPro" id="IPR001648">
    <property type="entry name" value="Ribosomal_bS18"/>
</dbReference>
<dbReference type="InterPro" id="IPR018275">
    <property type="entry name" value="Ribosomal_bS18_CS"/>
</dbReference>
<dbReference type="InterPro" id="IPR036870">
    <property type="entry name" value="Ribosomal_bS18_sf"/>
</dbReference>
<dbReference type="NCBIfam" id="TIGR00165">
    <property type="entry name" value="S18"/>
    <property type="match status" value="1"/>
</dbReference>
<dbReference type="PANTHER" id="PTHR13479">
    <property type="entry name" value="30S RIBOSOMAL PROTEIN S18"/>
    <property type="match status" value="1"/>
</dbReference>
<dbReference type="PANTHER" id="PTHR13479:SF40">
    <property type="entry name" value="SMALL RIBOSOMAL SUBUNIT PROTEIN BS18M"/>
    <property type="match status" value="1"/>
</dbReference>
<dbReference type="Pfam" id="PF01084">
    <property type="entry name" value="Ribosomal_S18"/>
    <property type="match status" value="1"/>
</dbReference>
<dbReference type="PRINTS" id="PR00974">
    <property type="entry name" value="RIBOSOMALS18"/>
</dbReference>
<dbReference type="SUPFAM" id="SSF46911">
    <property type="entry name" value="Ribosomal protein S18"/>
    <property type="match status" value="1"/>
</dbReference>
<dbReference type="PROSITE" id="PS00057">
    <property type="entry name" value="RIBOSOMAL_S18"/>
    <property type="match status" value="1"/>
</dbReference>
<name>RR18_CAPBU</name>